<protein>
    <recommendedName>
        <fullName evidence="1">Large ribosomal subunit protein uL13</fullName>
    </recommendedName>
    <alternativeName>
        <fullName evidence="2">50S ribosomal protein L13</fullName>
    </alternativeName>
</protein>
<feature type="chain" id="PRO_1000055424" description="Large ribosomal subunit protein uL13">
    <location>
        <begin position="1"/>
        <end position="139"/>
    </location>
</feature>
<sequence>MKFTRMVKPNEVERKWHVIDAEGKTFGRLVTEIATLLRGKHKPNYTPHVDCGDYVVVINASKVKVSGNKESKEYHRHTGYFGGVKSEKLAELREKNPEKLFKLATRGMLPKTKLGRAMLKKLKVYPGSEHPHTAQVKGN</sequence>
<accession>A6Q5F7</accession>
<evidence type="ECO:0000255" key="1">
    <source>
        <dbReference type="HAMAP-Rule" id="MF_01366"/>
    </source>
</evidence>
<evidence type="ECO:0000305" key="2"/>
<proteinExistence type="inferred from homology"/>
<gene>
    <name evidence="1" type="primary">rplM</name>
    <name type="ordered locus">NIS_1610</name>
</gene>
<comment type="function">
    <text evidence="1">This protein is one of the early assembly proteins of the 50S ribosomal subunit, although it is not seen to bind rRNA by itself. It is important during the early stages of 50S assembly.</text>
</comment>
<comment type="subunit">
    <text evidence="1">Part of the 50S ribosomal subunit.</text>
</comment>
<comment type="similarity">
    <text evidence="1">Belongs to the universal ribosomal protein uL13 family.</text>
</comment>
<reference key="1">
    <citation type="journal article" date="2007" name="Proc. Natl. Acad. Sci. U.S.A.">
        <title>Deep-sea vent epsilon-proteobacterial genomes provide insights into emergence of pathogens.</title>
        <authorList>
            <person name="Nakagawa S."/>
            <person name="Takaki Y."/>
            <person name="Shimamura S."/>
            <person name="Reysenbach A.-L."/>
            <person name="Takai K."/>
            <person name="Horikoshi K."/>
        </authorList>
    </citation>
    <scope>NUCLEOTIDE SEQUENCE [LARGE SCALE GENOMIC DNA]</scope>
    <source>
        <strain>SB155-2</strain>
    </source>
</reference>
<keyword id="KW-1185">Reference proteome</keyword>
<keyword id="KW-0687">Ribonucleoprotein</keyword>
<keyword id="KW-0689">Ribosomal protein</keyword>
<dbReference type="EMBL" id="AP009178">
    <property type="protein sequence ID" value="BAF70716.1"/>
    <property type="molecule type" value="Genomic_DNA"/>
</dbReference>
<dbReference type="RefSeq" id="WP_012082979.1">
    <property type="nucleotide sequence ID" value="NC_009662.1"/>
</dbReference>
<dbReference type="SMR" id="A6Q5F7"/>
<dbReference type="FunCoup" id="A6Q5F7">
    <property type="interactions" value="536"/>
</dbReference>
<dbReference type="STRING" id="387092.NIS_1610"/>
<dbReference type="KEGG" id="nis:NIS_1610"/>
<dbReference type="eggNOG" id="COG0102">
    <property type="taxonomic scope" value="Bacteria"/>
</dbReference>
<dbReference type="HOGENOM" id="CLU_082184_2_2_7"/>
<dbReference type="InParanoid" id="A6Q5F7"/>
<dbReference type="OrthoDB" id="9801330at2"/>
<dbReference type="Proteomes" id="UP000001118">
    <property type="component" value="Chromosome"/>
</dbReference>
<dbReference type="GO" id="GO:0022625">
    <property type="term" value="C:cytosolic large ribosomal subunit"/>
    <property type="evidence" value="ECO:0007669"/>
    <property type="project" value="TreeGrafter"/>
</dbReference>
<dbReference type="GO" id="GO:0003729">
    <property type="term" value="F:mRNA binding"/>
    <property type="evidence" value="ECO:0007669"/>
    <property type="project" value="TreeGrafter"/>
</dbReference>
<dbReference type="GO" id="GO:0003735">
    <property type="term" value="F:structural constituent of ribosome"/>
    <property type="evidence" value="ECO:0007669"/>
    <property type="project" value="InterPro"/>
</dbReference>
<dbReference type="GO" id="GO:0017148">
    <property type="term" value="P:negative regulation of translation"/>
    <property type="evidence" value="ECO:0007669"/>
    <property type="project" value="TreeGrafter"/>
</dbReference>
<dbReference type="GO" id="GO:0006412">
    <property type="term" value="P:translation"/>
    <property type="evidence" value="ECO:0007669"/>
    <property type="project" value="UniProtKB-UniRule"/>
</dbReference>
<dbReference type="CDD" id="cd00392">
    <property type="entry name" value="Ribosomal_L13"/>
    <property type="match status" value="1"/>
</dbReference>
<dbReference type="FunFam" id="3.90.1180.10:FF:000001">
    <property type="entry name" value="50S ribosomal protein L13"/>
    <property type="match status" value="1"/>
</dbReference>
<dbReference type="Gene3D" id="3.90.1180.10">
    <property type="entry name" value="Ribosomal protein L13"/>
    <property type="match status" value="1"/>
</dbReference>
<dbReference type="HAMAP" id="MF_01366">
    <property type="entry name" value="Ribosomal_uL13"/>
    <property type="match status" value="1"/>
</dbReference>
<dbReference type="InterPro" id="IPR005822">
    <property type="entry name" value="Ribosomal_uL13"/>
</dbReference>
<dbReference type="InterPro" id="IPR005823">
    <property type="entry name" value="Ribosomal_uL13_bac-type"/>
</dbReference>
<dbReference type="InterPro" id="IPR036899">
    <property type="entry name" value="Ribosomal_uL13_sf"/>
</dbReference>
<dbReference type="NCBIfam" id="TIGR01066">
    <property type="entry name" value="rplM_bact"/>
    <property type="match status" value="1"/>
</dbReference>
<dbReference type="PANTHER" id="PTHR11545:SF2">
    <property type="entry name" value="LARGE RIBOSOMAL SUBUNIT PROTEIN UL13M"/>
    <property type="match status" value="1"/>
</dbReference>
<dbReference type="PANTHER" id="PTHR11545">
    <property type="entry name" value="RIBOSOMAL PROTEIN L13"/>
    <property type="match status" value="1"/>
</dbReference>
<dbReference type="Pfam" id="PF00572">
    <property type="entry name" value="Ribosomal_L13"/>
    <property type="match status" value="1"/>
</dbReference>
<dbReference type="PIRSF" id="PIRSF002181">
    <property type="entry name" value="Ribosomal_L13"/>
    <property type="match status" value="1"/>
</dbReference>
<dbReference type="SUPFAM" id="SSF52161">
    <property type="entry name" value="Ribosomal protein L13"/>
    <property type="match status" value="1"/>
</dbReference>
<organism>
    <name type="scientific">Nitratiruptor sp. (strain SB155-2)</name>
    <dbReference type="NCBI Taxonomy" id="387092"/>
    <lineage>
        <taxon>Bacteria</taxon>
        <taxon>Pseudomonadati</taxon>
        <taxon>Campylobacterota</taxon>
        <taxon>Epsilonproteobacteria</taxon>
        <taxon>Nautiliales</taxon>
        <taxon>Nitratiruptoraceae</taxon>
        <taxon>Nitratiruptor</taxon>
    </lineage>
</organism>
<name>RL13_NITSB</name>